<proteinExistence type="inferred from homology"/>
<gene>
    <name type="primary">AIM24</name>
    <name type="ordered locus">PAS_chr1-4_0116</name>
</gene>
<comment type="subcellular location">
    <subcellularLocation>
        <location evidence="1">Mitochondrion</location>
    </subcellularLocation>
</comment>
<comment type="similarity">
    <text evidence="3">Belongs to the AIM24 family.</text>
</comment>
<accession>C4QXH2</accession>
<feature type="transit peptide" description="Mitochondrion" evidence="2">
    <location>
        <begin position="1"/>
        <end position="18"/>
    </location>
</feature>
<feature type="chain" id="PRO_0000399587" description="Altered inheritance of mitochondria protein 24, mitochondrial">
    <location>
        <begin position="19"/>
        <end position="374"/>
    </location>
</feature>
<dbReference type="EMBL" id="FN392319">
    <property type="protein sequence ID" value="CAY67945.1"/>
    <property type="molecule type" value="Genomic_DNA"/>
</dbReference>
<dbReference type="RefSeq" id="XP_002490226.1">
    <property type="nucleotide sequence ID" value="XM_002490181.1"/>
</dbReference>
<dbReference type="FunCoup" id="C4QXH2">
    <property type="interactions" value="15"/>
</dbReference>
<dbReference type="EnsemblFungi" id="CAY67945">
    <property type="protein sequence ID" value="CAY67945"/>
    <property type="gene ID" value="PAS_chr1-4_0116"/>
</dbReference>
<dbReference type="GeneID" id="8197332"/>
<dbReference type="KEGG" id="ppa:PAS_chr1-4_0116"/>
<dbReference type="eggNOG" id="ENOG502RXC5">
    <property type="taxonomic scope" value="Eukaryota"/>
</dbReference>
<dbReference type="HOGENOM" id="CLU_040665_0_0_1"/>
<dbReference type="InParanoid" id="C4QXH2"/>
<dbReference type="OMA" id="NGPYDLQ"/>
<dbReference type="OrthoDB" id="5295771at2759"/>
<dbReference type="Proteomes" id="UP000000314">
    <property type="component" value="Chromosome 1"/>
</dbReference>
<dbReference type="GO" id="GO:0005743">
    <property type="term" value="C:mitochondrial inner membrane"/>
    <property type="evidence" value="ECO:0007669"/>
    <property type="project" value="TreeGrafter"/>
</dbReference>
<dbReference type="GO" id="GO:0007007">
    <property type="term" value="P:inner mitochondrial membrane organization"/>
    <property type="evidence" value="ECO:0007669"/>
    <property type="project" value="TreeGrafter"/>
</dbReference>
<dbReference type="Gene3D" id="3.60.160.10">
    <property type="entry name" value="Mitochondrial biogenesis AIM24"/>
    <property type="match status" value="1"/>
</dbReference>
<dbReference type="InterPro" id="IPR002838">
    <property type="entry name" value="AIM24"/>
</dbReference>
<dbReference type="InterPro" id="IPR036983">
    <property type="entry name" value="AIM24_sf"/>
</dbReference>
<dbReference type="PANTHER" id="PTHR36959">
    <property type="entry name" value="ALTERED INHERITANCE OF MITOCHONDRIA PROTEIN 24, MITOCHONDRIAL"/>
    <property type="match status" value="1"/>
</dbReference>
<dbReference type="PANTHER" id="PTHR36959:SF2">
    <property type="entry name" value="ALTERED INHERITANCE OF MITOCHONDRIA PROTEIN 24, MITOCHONDRIAL"/>
    <property type="match status" value="1"/>
</dbReference>
<dbReference type="Pfam" id="PF01987">
    <property type="entry name" value="AIM24"/>
    <property type="match status" value="1"/>
</dbReference>
<name>AIM24_KOMPG</name>
<keyword id="KW-0496">Mitochondrion</keyword>
<keyword id="KW-1185">Reference proteome</keyword>
<keyword id="KW-0809">Transit peptide</keyword>
<protein>
    <recommendedName>
        <fullName>Altered inheritance of mitochondria protein 24, mitochondrial</fullName>
    </recommendedName>
</protein>
<organism>
    <name type="scientific">Komagataella phaffii (strain GS115 / ATCC 20864)</name>
    <name type="common">Yeast</name>
    <name type="synonym">Pichia pastoris</name>
    <dbReference type="NCBI Taxonomy" id="644223"/>
    <lineage>
        <taxon>Eukaryota</taxon>
        <taxon>Fungi</taxon>
        <taxon>Dikarya</taxon>
        <taxon>Ascomycota</taxon>
        <taxon>Saccharomycotina</taxon>
        <taxon>Pichiomycetes</taxon>
        <taxon>Pichiales</taxon>
        <taxon>Pichiaceae</taxon>
        <taxon>Komagataella</taxon>
    </lineage>
</organism>
<evidence type="ECO:0000250" key="1"/>
<evidence type="ECO:0000255" key="2"/>
<evidence type="ECO:0000305" key="3"/>
<sequence length="374" mass="41591">MLTQRVCRILNANVTVRNLSIVQASSVSSEKRKDSEQPKLLSSIDDIGVNQASKPVFQVIGSPATVLNVSIPPSYPLYVSKGSIISLNSKDKHSVLDSLVSQTRLINPIKRTLFGLINFRYEKIFSTIPFNALVSSSVSTFSWGSSSKIVRQRSFVSLDLDGRLDWAVFPPKAVQAYAGDNLTITNPFLPKSLTKFPRVYTLISGRGLLSLTGEGQIYKITLGNETILIRKENLLAISVNGNSEIPQSLKNVNLNKELKEGSREQISSRPVLKYFSQAKDVITSSYRYLTGNNQYIKVHGPRTLLLSTNSQLESFHYKNGQGSENYFSLAKSIGFANPEPQPKDYLKVVTIEKGEIKGYESKNSFLEEQKQQAQ</sequence>
<reference key="1">
    <citation type="journal article" date="2009" name="Nat. Biotechnol.">
        <title>Genome sequence of the recombinant protein production host Pichia pastoris.</title>
        <authorList>
            <person name="De Schutter K."/>
            <person name="Lin Y.-C."/>
            <person name="Tiels P."/>
            <person name="Van Hecke A."/>
            <person name="Glinka S."/>
            <person name="Weber-Lehmann J."/>
            <person name="Rouze P."/>
            <person name="Van de Peer Y."/>
            <person name="Callewaert N."/>
        </authorList>
    </citation>
    <scope>NUCLEOTIDE SEQUENCE [LARGE SCALE GENOMIC DNA]</scope>
    <source>
        <strain>GS115 / ATCC 20864</strain>
    </source>
</reference>